<sequence length="1273" mass="144758">MERIHVSVRARPLSSEDAKTSPWKISSDSIFMPNHSSLAFEFDRIFREDCKTVQVYEARTKEIVSAAVRGFNGTVFAYGQTNSGKTHTMRGSPIEPGVIPLAVHDLFDTIYQDASREFLLRMSYLEIYNEDINDLLAPEHRKLQIHENLEKGIFVAGLREEIVASPQQVLEMMEFGESHRHIGETNMNLYSSRSHTIFRMIIESRQKMQDEGVGNSCDAVRVSVLNLVDLAGSERAAKTGAEGVRLKEGSHINKSLMTLGTVIKKLSEGVETQGGHVPYRDSKLTRILQPALGGNANTAIICNITLAPIHADETKSSLQFASRALRVTNCAHVNEILTDAALLKRQKKEIEELRSKLKTSHSDHSEEEILNLRNTLLKSELERERIALELEEEKKAQAQRERVLQEQAKKIKNLSSMVLLSNRDEKREQDHFKKGKRRDTWCIGKLSRDSTSEDQSNVLSRGSSLESARSERETGPLLPFSELVNEPLYNINEEDEDSIEGTLEDSVLPDPCALVNVTSRKKPSIKQKNPVVVENELDRIQREYEALLLQYETERIISEIQIECLKVKLGEDGLSGDAKCKQSEVVGNVHCEEHVVNLRDPEAILLIKQLQEKINMLELEKSSSNRNLDDLVMVATEQNICAREKFAEIQEEIHAAREEAQVAREQLVSKESEVIDVINENFNSLVNVATEIEVLESEFQKYKASVETISSVMNEGLQDFAFFSPLIHDFTLFVRQSSEQHDSLINSYQTVQSSLKKKVLDVENEKLLLQEQCAGLQSQIEELNQEAQKHETSLKMLSEHHESERSDLLSHIECLEKDIGSLSSSSLAKEKENLRKDFEKTKTKLKDTESKLKNSMQDKTKLEAEKASAERELKRLHSQKALLERDISKQESFAGKRRDSLLVERSANQSLQEEFKQLEVLAFEMETTIASLEEELAAERGEKEEALCRNDGLGSEITDLTEKLEHSNTKLEHLQNDVTELKTRLEVSSSDQQQLETNVKQLLEEKEELAMHLANSLLEMEEEKAIWSSKEKALTEAVEEKIRLYKNIQIESLSKEMSEEKKELESCRLECVTLADRLRCSEENAKQDKESSLEKSLEIDRLGDELRSADAVSKQSQEVLKSDIDILKSEVQHACKMSDTFQREMDYVTSERQGLLARIEELSKELASSNRWQIENAKNPIQDLTLKISSQETNLHKDAAAENKEKAKLKMRLRGMQARLDAISLRYKQSVQESELMNRKFKEASAKLKEKLASKALEVLDLKKQLSASSRTM</sequence>
<dbReference type="EMBL" id="AC009400">
    <property type="protein sequence ID" value="AAF02823.1"/>
    <property type="status" value="ALT_SEQ"/>
    <property type="molecule type" value="Genomic_DNA"/>
</dbReference>
<dbReference type="EMBL" id="AC009400">
    <property type="protein sequence ID" value="AAF02824.1"/>
    <property type="status" value="ALT_SEQ"/>
    <property type="molecule type" value="Genomic_DNA"/>
</dbReference>
<dbReference type="EMBL" id="CP002686">
    <property type="protein sequence ID" value="AEE74868.1"/>
    <property type="molecule type" value="Genomic_DNA"/>
</dbReference>
<dbReference type="RefSeq" id="NP_187629.3">
    <property type="nucleotide sequence ID" value="NM_111853.4"/>
</dbReference>
<dbReference type="SMR" id="F4J2K4"/>
<dbReference type="FunCoup" id="F4J2K4">
    <property type="interactions" value="200"/>
</dbReference>
<dbReference type="IntAct" id="F4J2K4">
    <property type="interactions" value="1"/>
</dbReference>
<dbReference type="STRING" id="3702.F4J2K4"/>
<dbReference type="iPTMnet" id="F4J2K4"/>
<dbReference type="PaxDb" id="3702-AT3G10180.1"/>
<dbReference type="ProteomicsDB" id="250764"/>
<dbReference type="EnsemblPlants" id="AT3G10180.1">
    <property type="protein sequence ID" value="AT3G10180.1"/>
    <property type="gene ID" value="AT3G10180"/>
</dbReference>
<dbReference type="Gramene" id="AT3G10180.1">
    <property type="protein sequence ID" value="AT3G10180.1"/>
    <property type="gene ID" value="AT3G10180"/>
</dbReference>
<dbReference type="KEGG" id="ath:AT3G10180"/>
<dbReference type="Araport" id="AT3G10180"/>
<dbReference type="TAIR" id="AT3G10180"/>
<dbReference type="eggNOG" id="KOG0242">
    <property type="taxonomic scope" value="Eukaryota"/>
</dbReference>
<dbReference type="HOGENOM" id="CLU_001485_25_0_1"/>
<dbReference type="InParanoid" id="F4J2K4"/>
<dbReference type="PRO" id="PR:F4J2K4"/>
<dbReference type="Proteomes" id="UP000006548">
    <property type="component" value="Chromosome 3"/>
</dbReference>
<dbReference type="ExpressionAtlas" id="F4J2K4">
    <property type="expression patterns" value="baseline and differential"/>
</dbReference>
<dbReference type="GO" id="GO:0005874">
    <property type="term" value="C:microtubule"/>
    <property type="evidence" value="ECO:0007669"/>
    <property type="project" value="UniProtKB-KW"/>
</dbReference>
<dbReference type="GO" id="GO:0005524">
    <property type="term" value="F:ATP binding"/>
    <property type="evidence" value="ECO:0007669"/>
    <property type="project" value="UniProtKB-KW"/>
</dbReference>
<dbReference type="GO" id="GO:0008017">
    <property type="term" value="F:microtubule binding"/>
    <property type="evidence" value="ECO:0007669"/>
    <property type="project" value="InterPro"/>
</dbReference>
<dbReference type="GO" id="GO:0003777">
    <property type="term" value="F:microtubule motor activity"/>
    <property type="evidence" value="ECO:0007669"/>
    <property type="project" value="InterPro"/>
</dbReference>
<dbReference type="GO" id="GO:0007018">
    <property type="term" value="P:microtubule-based movement"/>
    <property type="evidence" value="ECO:0007669"/>
    <property type="project" value="InterPro"/>
</dbReference>
<dbReference type="CDD" id="cd01374">
    <property type="entry name" value="KISc_CENP_E"/>
    <property type="match status" value="1"/>
</dbReference>
<dbReference type="FunFam" id="3.40.850.10:FF:000026">
    <property type="entry name" value="Centromere-associated protein E"/>
    <property type="match status" value="1"/>
</dbReference>
<dbReference type="Gene3D" id="3.40.850.10">
    <property type="entry name" value="Kinesin motor domain"/>
    <property type="match status" value="1"/>
</dbReference>
<dbReference type="InterPro" id="IPR027640">
    <property type="entry name" value="Kinesin-like_fam"/>
</dbReference>
<dbReference type="InterPro" id="IPR019821">
    <property type="entry name" value="Kinesin_motor_CS"/>
</dbReference>
<dbReference type="InterPro" id="IPR001752">
    <property type="entry name" value="Kinesin_motor_dom"/>
</dbReference>
<dbReference type="InterPro" id="IPR036961">
    <property type="entry name" value="Kinesin_motor_dom_sf"/>
</dbReference>
<dbReference type="InterPro" id="IPR027417">
    <property type="entry name" value="P-loop_NTPase"/>
</dbReference>
<dbReference type="PANTHER" id="PTHR47968">
    <property type="entry name" value="CENTROMERE PROTEIN E"/>
    <property type="match status" value="1"/>
</dbReference>
<dbReference type="PANTHER" id="PTHR47968:SF75">
    <property type="entry name" value="CENTROMERE-ASSOCIATED PROTEIN E"/>
    <property type="match status" value="1"/>
</dbReference>
<dbReference type="Pfam" id="PF00225">
    <property type="entry name" value="Kinesin"/>
    <property type="match status" value="1"/>
</dbReference>
<dbReference type="PRINTS" id="PR00380">
    <property type="entry name" value="KINESINHEAVY"/>
</dbReference>
<dbReference type="SMART" id="SM00129">
    <property type="entry name" value="KISc"/>
    <property type="match status" value="1"/>
</dbReference>
<dbReference type="SUPFAM" id="SSF52540">
    <property type="entry name" value="P-loop containing nucleoside triphosphate hydrolases"/>
    <property type="match status" value="1"/>
</dbReference>
<dbReference type="PROSITE" id="PS00411">
    <property type="entry name" value="KINESIN_MOTOR_1"/>
    <property type="match status" value="1"/>
</dbReference>
<dbReference type="PROSITE" id="PS50067">
    <property type="entry name" value="KINESIN_MOTOR_2"/>
    <property type="match status" value="1"/>
</dbReference>
<name>KN7O_ARATH</name>
<comment type="similarity">
    <text evidence="4">Belongs to the TRAFAC class myosin-kinesin ATPase superfamily. Kinesin family. KIN-7 subfamily.</text>
</comment>
<comment type="sequence caution" evidence="5">
    <conflict type="erroneous gene model prediction">
        <sequence resource="EMBL-CDS" id="AAF02823"/>
    </conflict>
    <text>Was originally thought to correspond to two different genes At3g10170 and At3g10180.</text>
</comment>
<comment type="sequence caution" evidence="5">
    <conflict type="erroneous gene model prediction">
        <sequence resource="EMBL-CDS" id="AAF02824"/>
    </conflict>
    <text>Was originally thought to correspond to two different genes At3g10170 and At3g10180.</text>
</comment>
<feature type="chain" id="PRO_0000436473" description="Kinesin-like protein KIN-7O">
    <location>
        <begin position="1"/>
        <end position="1273"/>
    </location>
</feature>
<feature type="domain" description="Kinesin motor" evidence="2">
    <location>
        <begin position="3"/>
        <end position="327"/>
    </location>
</feature>
<feature type="region of interest" description="Disordered" evidence="3">
    <location>
        <begin position="452"/>
        <end position="474"/>
    </location>
</feature>
<feature type="coiled-coil region" evidence="1">
    <location>
        <begin position="333"/>
        <end position="408"/>
    </location>
</feature>
<feature type="coiled-coil region" evidence="1">
    <location>
        <begin position="602"/>
        <end position="674"/>
    </location>
</feature>
<feature type="coiled-coil region" evidence="1">
    <location>
        <begin position="751"/>
        <end position="1023"/>
    </location>
</feature>
<feature type="compositionally biased region" description="Polar residues" evidence="3">
    <location>
        <begin position="453"/>
        <end position="467"/>
    </location>
</feature>
<feature type="binding site" evidence="2">
    <location>
        <begin position="79"/>
        <end position="86"/>
    </location>
    <ligand>
        <name>ATP</name>
        <dbReference type="ChEBI" id="CHEBI:30616"/>
    </ligand>
</feature>
<proteinExistence type="inferred from homology"/>
<evidence type="ECO:0000255" key="1"/>
<evidence type="ECO:0000255" key="2">
    <source>
        <dbReference type="PROSITE-ProRule" id="PRU00283"/>
    </source>
</evidence>
<evidence type="ECO:0000256" key="3">
    <source>
        <dbReference type="SAM" id="MobiDB-lite"/>
    </source>
</evidence>
<evidence type="ECO:0000303" key="4">
    <source>
    </source>
</evidence>
<evidence type="ECO:0000305" key="5"/>
<evidence type="ECO:0000312" key="6">
    <source>
        <dbReference type="Araport" id="AT3G10180"/>
    </source>
</evidence>
<evidence type="ECO:0000312" key="7">
    <source>
        <dbReference type="EMBL" id="AAF02823.1"/>
    </source>
</evidence>
<evidence type="ECO:0000312" key="8">
    <source>
        <dbReference type="EMBL" id="AAF02824.1"/>
    </source>
</evidence>
<gene>
    <name evidence="5" type="primary">KIN7O</name>
    <name evidence="6" type="ordered locus">At3g10180/At3g10170</name>
    <name evidence="7 8" type="ORF">F14P13.23/F14P13.22</name>
</gene>
<protein>
    <recommendedName>
        <fullName evidence="5">Kinesin-like protein KIN-7O</fullName>
    </recommendedName>
</protein>
<accession>F4J2K4</accession>
<accession>Q9SS29</accession>
<accession>Q9SS30</accession>
<reference key="1">
    <citation type="journal article" date="2000" name="Nature">
        <title>Sequence and analysis of chromosome 3 of the plant Arabidopsis thaliana.</title>
        <authorList>
            <person name="Salanoubat M."/>
            <person name="Lemcke K."/>
            <person name="Rieger M."/>
            <person name="Ansorge W."/>
            <person name="Unseld M."/>
            <person name="Fartmann B."/>
            <person name="Valle G."/>
            <person name="Bloecker H."/>
            <person name="Perez-Alonso M."/>
            <person name="Obermaier B."/>
            <person name="Delseny M."/>
            <person name="Boutry M."/>
            <person name="Grivell L.A."/>
            <person name="Mache R."/>
            <person name="Puigdomenech P."/>
            <person name="De Simone V."/>
            <person name="Choisne N."/>
            <person name="Artiguenave F."/>
            <person name="Robert C."/>
            <person name="Brottier P."/>
            <person name="Wincker P."/>
            <person name="Cattolico L."/>
            <person name="Weissenbach J."/>
            <person name="Saurin W."/>
            <person name="Quetier F."/>
            <person name="Schaefer M."/>
            <person name="Mueller-Auer S."/>
            <person name="Gabel C."/>
            <person name="Fuchs M."/>
            <person name="Benes V."/>
            <person name="Wurmbach E."/>
            <person name="Drzonek H."/>
            <person name="Erfle H."/>
            <person name="Jordan N."/>
            <person name="Bangert S."/>
            <person name="Wiedelmann R."/>
            <person name="Kranz H."/>
            <person name="Voss H."/>
            <person name="Holland R."/>
            <person name="Brandt P."/>
            <person name="Nyakatura G."/>
            <person name="Vezzi A."/>
            <person name="D'Angelo M."/>
            <person name="Pallavicini A."/>
            <person name="Toppo S."/>
            <person name="Simionati B."/>
            <person name="Conrad A."/>
            <person name="Hornischer K."/>
            <person name="Kauer G."/>
            <person name="Loehnert T.-H."/>
            <person name="Nordsiek G."/>
            <person name="Reichelt J."/>
            <person name="Scharfe M."/>
            <person name="Schoen O."/>
            <person name="Bargues M."/>
            <person name="Terol J."/>
            <person name="Climent J."/>
            <person name="Navarro P."/>
            <person name="Collado C."/>
            <person name="Perez-Perez A."/>
            <person name="Ottenwaelder B."/>
            <person name="Duchemin D."/>
            <person name="Cooke R."/>
            <person name="Laudie M."/>
            <person name="Berger-Llauro C."/>
            <person name="Purnelle B."/>
            <person name="Masuy D."/>
            <person name="de Haan M."/>
            <person name="Maarse A.C."/>
            <person name="Alcaraz J.-P."/>
            <person name="Cottet A."/>
            <person name="Casacuberta E."/>
            <person name="Monfort A."/>
            <person name="Argiriou A."/>
            <person name="Flores M."/>
            <person name="Liguori R."/>
            <person name="Vitale D."/>
            <person name="Mannhaupt G."/>
            <person name="Haase D."/>
            <person name="Schoof H."/>
            <person name="Rudd S."/>
            <person name="Zaccaria P."/>
            <person name="Mewes H.-W."/>
            <person name="Mayer K.F.X."/>
            <person name="Kaul S."/>
            <person name="Town C.D."/>
            <person name="Koo H.L."/>
            <person name="Tallon L.J."/>
            <person name="Jenkins J."/>
            <person name="Rooney T."/>
            <person name="Rizzo M."/>
            <person name="Walts A."/>
            <person name="Utterback T."/>
            <person name="Fujii C.Y."/>
            <person name="Shea T.P."/>
            <person name="Creasy T.H."/>
            <person name="Haas B."/>
            <person name="Maiti R."/>
            <person name="Wu D."/>
            <person name="Peterson J."/>
            <person name="Van Aken S."/>
            <person name="Pai G."/>
            <person name="Militscher J."/>
            <person name="Sellers P."/>
            <person name="Gill J.E."/>
            <person name="Feldblyum T.V."/>
            <person name="Preuss D."/>
            <person name="Lin X."/>
            <person name="Nierman W.C."/>
            <person name="Salzberg S.L."/>
            <person name="White O."/>
            <person name="Venter J.C."/>
            <person name="Fraser C.M."/>
            <person name="Kaneko T."/>
            <person name="Nakamura Y."/>
            <person name="Sato S."/>
            <person name="Kato T."/>
            <person name="Asamizu E."/>
            <person name="Sasamoto S."/>
            <person name="Kimura T."/>
            <person name="Idesawa K."/>
            <person name="Kawashima K."/>
            <person name="Kishida Y."/>
            <person name="Kiyokawa C."/>
            <person name="Kohara M."/>
            <person name="Matsumoto M."/>
            <person name="Matsuno A."/>
            <person name="Muraki A."/>
            <person name="Nakayama S."/>
            <person name="Nakazaki N."/>
            <person name="Shinpo S."/>
            <person name="Takeuchi C."/>
            <person name="Wada T."/>
            <person name="Watanabe A."/>
            <person name="Yamada M."/>
            <person name="Yasuda M."/>
            <person name="Tabata S."/>
        </authorList>
    </citation>
    <scope>NUCLEOTIDE SEQUENCE [LARGE SCALE GENOMIC DNA]</scope>
    <source>
        <strain>cv. Columbia</strain>
    </source>
</reference>
<reference key="2">
    <citation type="journal article" date="2017" name="Plant J.">
        <title>Araport11: a complete reannotation of the Arabidopsis thaliana reference genome.</title>
        <authorList>
            <person name="Cheng C.Y."/>
            <person name="Krishnakumar V."/>
            <person name="Chan A.P."/>
            <person name="Thibaud-Nissen F."/>
            <person name="Schobel S."/>
            <person name="Town C.D."/>
        </authorList>
    </citation>
    <scope>GENOME REANNOTATION</scope>
    <source>
        <strain>cv. Columbia</strain>
    </source>
</reference>
<reference key="3">
    <citation type="journal article" date="2001" name="BMC Genomics">
        <title>Kinesins in the Arabidopsis genome: a comparative analysis among eukaryotes.</title>
        <authorList>
            <person name="Reddy A.S."/>
            <person name="Day I.S."/>
        </authorList>
    </citation>
    <scope>GENE FAMILY</scope>
</reference>
<reference key="4">
    <citation type="journal article" date="2006" name="BMC Genomics">
        <title>Comprehensive comparative analysis of kinesins in photosynthetic eukaryotes.</title>
        <authorList>
            <person name="Richardson D.N."/>
            <person name="Simmons M.P."/>
            <person name="Reddy A.S."/>
        </authorList>
    </citation>
    <scope>GENE FAMILY</scope>
    <scope>NOMENCLATURE</scope>
</reference>
<reference key="5">
    <citation type="journal article" date="2012" name="Protoplasma">
        <title>Functions of the Arabidopsis kinesin superfamily of microtubule-based motor proteins.</title>
        <authorList>
            <person name="Zhu C."/>
            <person name="Dixit R."/>
        </authorList>
    </citation>
    <scope>REVIEW</scope>
</reference>
<keyword id="KW-0067">ATP-binding</keyword>
<keyword id="KW-0175">Coiled coil</keyword>
<keyword id="KW-0493">Microtubule</keyword>
<keyword id="KW-0505">Motor protein</keyword>
<keyword id="KW-0547">Nucleotide-binding</keyword>
<keyword id="KW-1185">Reference proteome</keyword>
<organism>
    <name type="scientific">Arabidopsis thaliana</name>
    <name type="common">Mouse-ear cress</name>
    <dbReference type="NCBI Taxonomy" id="3702"/>
    <lineage>
        <taxon>Eukaryota</taxon>
        <taxon>Viridiplantae</taxon>
        <taxon>Streptophyta</taxon>
        <taxon>Embryophyta</taxon>
        <taxon>Tracheophyta</taxon>
        <taxon>Spermatophyta</taxon>
        <taxon>Magnoliopsida</taxon>
        <taxon>eudicotyledons</taxon>
        <taxon>Gunneridae</taxon>
        <taxon>Pentapetalae</taxon>
        <taxon>rosids</taxon>
        <taxon>malvids</taxon>
        <taxon>Brassicales</taxon>
        <taxon>Brassicaceae</taxon>
        <taxon>Camelineae</taxon>
        <taxon>Arabidopsis</taxon>
    </lineage>
</organism>